<reference key="1">
    <citation type="journal article" date="1999" name="Mol. Phylogenet. Evol.">
        <title>Molecular phylogeny of ateline new world monkeys (Platyrrhini, atelinae) based on gamma-globin gene sequences: evidence that Brachyteles is the sister group of Lagothrix.</title>
        <authorList>
            <person name="Meireles C.M."/>
            <person name="Czelusniak J."/>
            <person name="Schneider M.P.C."/>
            <person name="Muniz J.A.P.C."/>
            <person name="Brigido M.C."/>
            <person name="Ferreira H.S."/>
            <person name="Goodman M."/>
        </authorList>
    </citation>
    <scope>NUCLEOTIDE SEQUENCE [GENOMIC DNA]</scope>
</reference>
<feature type="chain" id="PRO_0000053233" description="Hemoglobin subunit gamma">
    <location>
        <begin position="1"/>
        <end position="147"/>
    </location>
</feature>
<feature type="domain" description="Globin" evidence="1">
    <location>
        <begin position="3"/>
        <end position="147"/>
    </location>
</feature>
<feature type="binding site" description="distal binding residue" evidence="1">
    <location>
        <position position="64"/>
    </location>
    <ligand>
        <name>heme b</name>
        <dbReference type="ChEBI" id="CHEBI:60344"/>
    </ligand>
    <ligandPart>
        <name>Fe</name>
        <dbReference type="ChEBI" id="CHEBI:18248"/>
    </ligandPart>
</feature>
<feature type="binding site" description="proximal binding residue" evidence="1">
    <location>
        <position position="93"/>
    </location>
    <ligand>
        <name>heme b</name>
        <dbReference type="ChEBI" id="CHEBI:60344"/>
    </ligand>
    <ligandPart>
        <name>Fe</name>
        <dbReference type="ChEBI" id="CHEBI:18248"/>
    </ligandPart>
</feature>
<sequence length="147" mass="15899">MSNFTAEDKAAITSLWGKVNVEDAGGETLGRLLVVYPWTQRFFDSFGSLSSPSAIMGNPKVKAHGVKVLTSLGEAIKNLDDLKGTFGSLSELHCDKLHVDPENFRLLGNVLVTVLAILHGKEFTPEVQASWQKMVAGVASALASRYH</sequence>
<comment type="function">
    <text>Gamma chains make up the fetal hemoglobin F, in combination with alpha chains.</text>
</comment>
<comment type="subunit">
    <text>Heterotetramer of two alpha chains and two gamma chains in fetal hemoglobin (Hb F).</text>
</comment>
<comment type="tissue specificity">
    <text>Red blood cells.</text>
</comment>
<comment type="similarity">
    <text evidence="1">Belongs to the globin family.</text>
</comment>
<proteinExistence type="evidence at transcript level"/>
<organism>
    <name type="scientific">Alouatta belzebul</name>
    <name type="common">Red-handed howler monkey</name>
    <dbReference type="NCBI Taxonomy" id="30590"/>
    <lineage>
        <taxon>Eukaryota</taxon>
        <taxon>Metazoa</taxon>
        <taxon>Chordata</taxon>
        <taxon>Craniata</taxon>
        <taxon>Vertebrata</taxon>
        <taxon>Euteleostomi</taxon>
        <taxon>Mammalia</taxon>
        <taxon>Eutheria</taxon>
        <taxon>Euarchontoglires</taxon>
        <taxon>Primates</taxon>
        <taxon>Haplorrhini</taxon>
        <taxon>Platyrrhini</taxon>
        <taxon>Atelidae</taxon>
        <taxon>Alouattinae</taxon>
        <taxon>Alouatta</taxon>
    </lineage>
</organism>
<evidence type="ECO:0000255" key="1">
    <source>
        <dbReference type="PROSITE-ProRule" id="PRU00238"/>
    </source>
</evidence>
<keyword id="KW-0349">Heme</keyword>
<keyword id="KW-0408">Iron</keyword>
<keyword id="KW-0479">Metal-binding</keyword>
<keyword id="KW-0561">Oxygen transport</keyword>
<keyword id="KW-0813">Transport</keyword>
<name>HBG_ALOBE</name>
<accession>P68030</accession>
<accession>P56284</accession>
<dbReference type="EMBL" id="AF030096">
    <property type="protein sequence ID" value="AAB92230.1"/>
    <property type="molecule type" value="Genomic_DNA"/>
</dbReference>
<dbReference type="SMR" id="P68030"/>
<dbReference type="GO" id="GO:0072562">
    <property type="term" value="C:blood microparticle"/>
    <property type="evidence" value="ECO:0007669"/>
    <property type="project" value="TreeGrafter"/>
</dbReference>
<dbReference type="GO" id="GO:0031838">
    <property type="term" value="C:haptoglobin-hemoglobin complex"/>
    <property type="evidence" value="ECO:0007669"/>
    <property type="project" value="TreeGrafter"/>
</dbReference>
<dbReference type="GO" id="GO:0005833">
    <property type="term" value="C:hemoglobin complex"/>
    <property type="evidence" value="ECO:0007669"/>
    <property type="project" value="InterPro"/>
</dbReference>
<dbReference type="GO" id="GO:0031720">
    <property type="term" value="F:haptoglobin binding"/>
    <property type="evidence" value="ECO:0007669"/>
    <property type="project" value="TreeGrafter"/>
</dbReference>
<dbReference type="GO" id="GO:0020037">
    <property type="term" value="F:heme binding"/>
    <property type="evidence" value="ECO:0007669"/>
    <property type="project" value="InterPro"/>
</dbReference>
<dbReference type="GO" id="GO:0031721">
    <property type="term" value="F:hemoglobin alpha binding"/>
    <property type="evidence" value="ECO:0007669"/>
    <property type="project" value="TreeGrafter"/>
</dbReference>
<dbReference type="GO" id="GO:0046872">
    <property type="term" value="F:metal ion binding"/>
    <property type="evidence" value="ECO:0007669"/>
    <property type="project" value="UniProtKB-KW"/>
</dbReference>
<dbReference type="GO" id="GO:0043177">
    <property type="term" value="F:organic acid binding"/>
    <property type="evidence" value="ECO:0007669"/>
    <property type="project" value="TreeGrafter"/>
</dbReference>
<dbReference type="GO" id="GO:0019825">
    <property type="term" value="F:oxygen binding"/>
    <property type="evidence" value="ECO:0007669"/>
    <property type="project" value="InterPro"/>
</dbReference>
<dbReference type="GO" id="GO:0005344">
    <property type="term" value="F:oxygen carrier activity"/>
    <property type="evidence" value="ECO:0007669"/>
    <property type="project" value="UniProtKB-KW"/>
</dbReference>
<dbReference type="GO" id="GO:0004601">
    <property type="term" value="F:peroxidase activity"/>
    <property type="evidence" value="ECO:0007669"/>
    <property type="project" value="TreeGrafter"/>
</dbReference>
<dbReference type="GO" id="GO:0042744">
    <property type="term" value="P:hydrogen peroxide catabolic process"/>
    <property type="evidence" value="ECO:0007669"/>
    <property type="project" value="TreeGrafter"/>
</dbReference>
<dbReference type="CDD" id="cd08925">
    <property type="entry name" value="Hb-beta-like"/>
    <property type="match status" value="1"/>
</dbReference>
<dbReference type="FunFam" id="1.10.490.10:FF:000001">
    <property type="entry name" value="Hemoglobin subunit beta"/>
    <property type="match status" value="1"/>
</dbReference>
<dbReference type="Gene3D" id="1.10.490.10">
    <property type="entry name" value="Globins"/>
    <property type="match status" value="1"/>
</dbReference>
<dbReference type="InterPro" id="IPR000971">
    <property type="entry name" value="Globin"/>
</dbReference>
<dbReference type="InterPro" id="IPR009050">
    <property type="entry name" value="Globin-like_sf"/>
</dbReference>
<dbReference type="InterPro" id="IPR012292">
    <property type="entry name" value="Globin/Proto"/>
</dbReference>
<dbReference type="InterPro" id="IPR002337">
    <property type="entry name" value="Hemoglobin_b"/>
</dbReference>
<dbReference type="InterPro" id="IPR050056">
    <property type="entry name" value="Hemoglobin_oxygen_transport"/>
</dbReference>
<dbReference type="PANTHER" id="PTHR11442">
    <property type="entry name" value="HEMOGLOBIN FAMILY MEMBER"/>
    <property type="match status" value="1"/>
</dbReference>
<dbReference type="PANTHER" id="PTHR11442:SF52">
    <property type="entry name" value="HEMOGLOBIN SUBUNIT GAMMA-1"/>
    <property type="match status" value="1"/>
</dbReference>
<dbReference type="Pfam" id="PF00042">
    <property type="entry name" value="Globin"/>
    <property type="match status" value="1"/>
</dbReference>
<dbReference type="PRINTS" id="PR00814">
    <property type="entry name" value="BETAHAEM"/>
</dbReference>
<dbReference type="SUPFAM" id="SSF46458">
    <property type="entry name" value="Globin-like"/>
    <property type="match status" value="1"/>
</dbReference>
<dbReference type="PROSITE" id="PS01033">
    <property type="entry name" value="GLOBIN"/>
    <property type="match status" value="1"/>
</dbReference>
<gene>
    <name type="primary">HBG</name>
</gene>
<protein>
    <recommendedName>
        <fullName>Hemoglobin subunit gamma</fullName>
    </recommendedName>
    <alternativeName>
        <fullName>Gamma-globin</fullName>
    </alternativeName>
    <alternativeName>
        <fullName>Hemoglobin gamma chain</fullName>
    </alternativeName>
</protein>